<dbReference type="EC" id="2.4.1.-" evidence="6"/>
<dbReference type="EMBL" id="HG970332">
    <property type="protein sequence ID" value="CEF72686.1"/>
    <property type="molecule type" value="Genomic_DNA"/>
</dbReference>
<dbReference type="RefSeq" id="XP_011316405.1">
    <property type="nucleotide sequence ID" value="XM_011318103.1"/>
</dbReference>
<dbReference type="STRING" id="229533.I1RB03"/>
<dbReference type="GlyCosmos" id="I1RB03">
    <property type="glycosylation" value="4 sites, No reported glycans"/>
</dbReference>
<dbReference type="KEGG" id="fgr:FGSG_00702"/>
<dbReference type="VEuPathDB" id="FungiDB:FGRAMPH1_01G01771"/>
<dbReference type="eggNOG" id="KOG2571">
    <property type="taxonomic scope" value="Eukaryota"/>
</dbReference>
<dbReference type="HOGENOM" id="CLU_019940_4_1_1"/>
<dbReference type="InParanoid" id="I1RB03"/>
<dbReference type="OrthoDB" id="731at110618"/>
<dbReference type="PHI-base" id="PHI:7559"/>
<dbReference type="Proteomes" id="UP000070720">
    <property type="component" value="Chromosome 1"/>
</dbReference>
<dbReference type="GO" id="GO:0005576">
    <property type="term" value="C:extracellular region"/>
    <property type="evidence" value="ECO:0007669"/>
    <property type="project" value="UniProtKB-KW"/>
</dbReference>
<dbReference type="GO" id="GO:0005886">
    <property type="term" value="C:plasma membrane"/>
    <property type="evidence" value="ECO:0007669"/>
    <property type="project" value="UniProtKB-SubCell"/>
</dbReference>
<dbReference type="GO" id="GO:0016757">
    <property type="term" value="F:glycosyltransferase activity"/>
    <property type="evidence" value="ECO:0007669"/>
    <property type="project" value="UniProtKB-KW"/>
</dbReference>
<dbReference type="GO" id="GO:0030448">
    <property type="term" value="P:hyphal growth"/>
    <property type="evidence" value="ECO:0000315"/>
    <property type="project" value="PHI-base"/>
</dbReference>
<dbReference type="CDD" id="cd06434">
    <property type="entry name" value="GT2_HAS"/>
    <property type="match status" value="1"/>
</dbReference>
<dbReference type="Gene3D" id="3.90.550.10">
    <property type="entry name" value="Spore Coat Polysaccharide Biosynthesis Protein SpsA, Chain A"/>
    <property type="match status" value="1"/>
</dbReference>
<dbReference type="InterPro" id="IPR052427">
    <property type="entry name" value="Glycosyltrans_GT2/GT47"/>
</dbReference>
<dbReference type="InterPro" id="IPR029044">
    <property type="entry name" value="Nucleotide-diphossugar_trans"/>
</dbReference>
<dbReference type="PANTHER" id="PTHR47844:SF1">
    <property type="entry name" value="EXOSTOSIN-LIKE 2"/>
    <property type="match status" value="1"/>
</dbReference>
<dbReference type="PANTHER" id="PTHR47844">
    <property type="entry name" value="SYNTHASE CPS1, PUTATIVE (AFU_ORTHOLOGUE AFUA_7G02500)-RELATED"/>
    <property type="match status" value="1"/>
</dbReference>
<dbReference type="Pfam" id="PF13641">
    <property type="entry name" value="Glyco_tranf_2_3"/>
    <property type="match status" value="1"/>
</dbReference>
<dbReference type="SUPFAM" id="SSF53448">
    <property type="entry name" value="Nucleotide-diphospho-sugar transferases"/>
    <property type="match status" value="1"/>
</dbReference>
<feature type="chain" id="PRO_0000448755" description="Type 2 glycosyltransferase">
    <location>
        <begin position="1"/>
        <end position="526"/>
    </location>
</feature>
<feature type="transmembrane region" description="Helical" evidence="1">
    <location>
        <begin position="25"/>
        <end position="45"/>
    </location>
</feature>
<feature type="transmembrane region" description="Helical" evidence="1">
    <location>
        <begin position="340"/>
        <end position="360"/>
    </location>
</feature>
<feature type="transmembrane region" description="Helical" evidence="1">
    <location>
        <begin position="375"/>
        <end position="395"/>
    </location>
</feature>
<feature type="transmembrane region" description="Helical" evidence="1">
    <location>
        <begin position="403"/>
        <end position="423"/>
    </location>
</feature>
<feature type="glycosylation site" description="N-linked (GlcNAc...) asparagine" evidence="2">
    <location>
        <position position="298"/>
    </location>
</feature>
<feature type="glycosylation site" description="N-linked (GlcNAc...) asparagine" evidence="2">
    <location>
        <position position="317"/>
    </location>
</feature>
<feature type="glycosylation site" description="N-linked (GlcNAc...) asparagine" evidence="2">
    <location>
        <position position="426"/>
    </location>
</feature>
<feature type="glycosylation site" description="N-linked (GlcNAc...) asparagine" evidence="2">
    <location>
        <position position="517"/>
    </location>
</feature>
<keyword id="KW-1003">Cell membrane</keyword>
<keyword id="KW-0134">Cell wall</keyword>
<keyword id="KW-0325">Glycoprotein</keyword>
<keyword id="KW-0328">Glycosyltransferase</keyword>
<keyword id="KW-0472">Membrane</keyword>
<keyword id="KW-1185">Reference proteome</keyword>
<keyword id="KW-0964">Secreted</keyword>
<keyword id="KW-0808">Transferase</keyword>
<keyword id="KW-0812">Transmembrane</keyword>
<keyword id="KW-1133">Transmembrane helix</keyword>
<keyword id="KW-0843">Virulence</keyword>
<organism>
    <name type="scientific">Gibberella zeae (strain ATCC MYA-4620 / CBS 123657 / FGSC 9075 / NRRL 31084 / PH-1)</name>
    <name type="common">Wheat head blight fungus</name>
    <name type="synonym">Fusarium graminearum</name>
    <dbReference type="NCBI Taxonomy" id="229533"/>
    <lineage>
        <taxon>Eukaryota</taxon>
        <taxon>Fungi</taxon>
        <taxon>Dikarya</taxon>
        <taxon>Ascomycota</taxon>
        <taxon>Pezizomycotina</taxon>
        <taxon>Sordariomycetes</taxon>
        <taxon>Hypocreomycetidae</taxon>
        <taxon>Hypocreales</taxon>
        <taxon>Nectriaceae</taxon>
        <taxon>Fusarium</taxon>
    </lineage>
</organism>
<gene>
    <name evidence="4" type="primary">GT2</name>
    <name type="ORF">FG00702</name>
    <name type="ORF">FGRAMPH1_01T01771</name>
</gene>
<sequence>MSESEHQNVGRSPLGFAGPLSLSMPSFDFWYSSTFWLYLFLGLWFHRYFRLLVHCVSHWTYKSKPIPSKPTFTSKDVTVVIPTIHNAFEELRPSLESILACEPAELILVTTHDKRKELQKLADSLVFPKVRVLDTPIANKRLQVCEALPKVETPITIMADDDVTWPSTLMPWILAPFEDPEIGGVGTCQRVRREHDGSWSTKAWNWLGAAYIERRNFEISATHNIDGGTSCMSGRTGAYRSEILSSHDFLHGFKNEKWRKWILNADDDNFVTRWLVSHQWKTWIQYEKECEIETTLENSTKFLYQCSRWARSNWRSNWTSMVTERYIWKQQLWCTYALHFATFTSLAFLIDPLLLASCWWGTADWDMQNRRYAFWSQFVFMFAFTKVVKLMGLFIRNPTDVMFLPVSVVFGYFHGLVKLYALITLNMTSWGSRADGDANDEQRLAPAPQPSIVLKTPPGKGSLIRYNARQKGRQTQAQQVSWEKSDYASYDSSTSYVPIRVHTPMATTPIDTKLYTNESSNTCWAI</sequence>
<proteinExistence type="evidence at transcript level"/>
<name>GT2_GIBZE</name>
<comment type="function">
    <text evidence="3">Glycosyltransferase involved in the maintenance of the outermost surface of the fungal cell wall (PubMed:29020037). Likely functions in the synthesis of a currently unknown, potentially minor but widespread, extracellular or outer cell wall polysaccharide which plays a key role in facilitating many interactions between plants and fungi by enabling hyphal growth on solid matrices (PubMed:29020037).</text>
</comment>
<comment type="subcellular location">
    <subcellularLocation>
        <location evidence="5">Cell membrane</location>
        <topology evidence="1">Multi-pass membrane protein</topology>
    </subcellularLocation>
    <subcellularLocation>
        <location evidence="3">Secreted</location>
        <location evidence="3">Cell wall</location>
    </subcellularLocation>
</comment>
<comment type="induction">
    <text evidence="3">Expression is induced during hyphal growth.</text>
</comment>
<comment type="disruption phenotype">
    <text evidence="3">Severely impairs hyphal growth and pathogenicity on wheat leaves (PubMed:29020037). Does not affect adhesion to leaf surfaces (PubMed:29020037). Leads to constitutive overexpression of several transmembrane and secreted proteins, including an important LysM-domain chitin-binding virulence effector, LysM (PubMed:29020037).</text>
</comment>
<comment type="similarity">
    <text evidence="5">Belongs to the GT2 glycosyltransferase family.</text>
</comment>
<evidence type="ECO:0000255" key="1"/>
<evidence type="ECO:0000255" key="2">
    <source>
        <dbReference type="PROSITE-ProRule" id="PRU00498"/>
    </source>
</evidence>
<evidence type="ECO:0000269" key="3">
    <source>
    </source>
</evidence>
<evidence type="ECO:0000303" key="4">
    <source>
    </source>
</evidence>
<evidence type="ECO:0000305" key="5"/>
<evidence type="ECO:0000305" key="6">
    <source>
    </source>
</evidence>
<protein>
    <recommendedName>
        <fullName evidence="4">Type 2 glycosyltransferase</fullName>
        <ecNumber evidence="6">2.4.1.-</ecNumber>
    </recommendedName>
</protein>
<accession>I1RB03</accession>
<reference key="1">
    <citation type="journal article" date="2007" name="Science">
        <title>The Fusarium graminearum genome reveals a link between localized polymorphism and pathogen specialization.</title>
        <authorList>
            <person name="Cuomo C.A."/>
            <person name="Gueldener U."/>
            <person name="Xu J.-R."/>
            <person name="Trail F."/>
            <person name="Turgeon B.G."/>
            <person name="Di Pietro A."/>
            <person name="Walton J.D."/>
            <person name="Ma L.-J."/>
            <person name="Baker S.E."/>
            <person name="Rep M."/>
            <person name="Adam G."/>
            <person name="Antoniw J."/>
            <person name="Baldwin T."/>
            <person name="Calvo S.E."/>
            <person name="Chang Y.-L."/>
            <person name="DeCaprio D."/>
            <person name="Gale L.R."/>
            <person name="Gnerre S."/>
            <person name="Goswami R.S."/>
            <person name="Hammond-Kosack K."/>
            <person name="Harris L.J."/>
            <person name="Hilburn K."/>
            <person name="Kennell J.C."/>
            <person name="Kroken S."/>
            <person name="Magnuson J.K."/>
            <person name="Mannhaupt G."/>
            <person name="Mauceli E.W."/>
            <person name="Mewes H.-W."/>
            <person name="Mitterbauer R."/>
            <person name="Muehlbauer G."/>
            <person name="Muensterkoetter M."/>
            <person name="Nelson D."/>
            <person name="O'Donnell K."/>
            <person name="Ouellet T."/>
            <person name="Qi W."/>
            <person name="Quesneville H."/>
            <person name="Roncero M.I.G."/>
            <person name="Seong K.-Y."/>
            <person name="Tetko I.V."/>
            <person name="Urban M."/>
            <person name="Waalwijk C."/>
            <person name="Ward T.J."/>
            <person name="Yao J."/>
            <person name="Birren B.W."/>
            <person name="Kistler H.C."/>
        </authorList>
    </citation>
    <scope>NUCLEOTIDE SEQUENCE [LARGE SCALE GENOMIC DNA]</scope>
    <source>
        <strain>ATCC MYA-4620 / CBS 123657 / FGSC 9075 / NRRL 31084 / PH-1</strain>
    </source>
</reference>
<reference key="2">
    <citation type="journal article" date="2010" name="Nature">
        <title>Comparative genomics reveals mobile pathogenicity chromosomes in Fusarium.</title>
        <authorList>
            <person name="Ma L.-J."/>
            <person name="van der Does H.C."/>
            <person name="Borkovich K.A."/>
            <person name="Coleman J.J."/>
            <person name="Daboussi M.-J."/>
            <person name="Di Pietro A."/>
            <person name="Dufresne M."/>
            <person name="Freitag M."/>
            <person name="Grabherr M."/>
            <person name="Henrissat B."/>
            <person name="Houterman P.M."/>
            <person name="Kang S."/>
            <person name="Shim W.-B."/>
            <person name="Woloshuk C."/>
            <person name="Xie X."/>
            <person name="Xu J.-R."/>
            <person name="Antoniw J."/>
            <person name="Baker S.E."/>
            <person name="Bluhm B.H."/>
            <person name="Breakspear A."/>
            <person name="Brown D.W."/>
            <person name="Butchko R.A.E."/>
            <person name="Chapman S."/>
            <person name="Coulson R."/>
            <person name="Coutinho P.M."/>
            <person name="Danchin E.G.J."/>
            <person name="Diener A."/>
            <person name="Gale L.R."/>
            <person name="Gardiner D.M."/>
            <person name="Goff S."/>
            <person name="Hammond-Kosack K.E."/>
            <person name="Hilburn K."/>
            <person name="Hua-Van A."/>
            <person name="Jonkers W."/>
            <person name="Kazan K."/>
            <person name="Kodira C.D."/>
            <person name="Koehrsen M."/>
            <person name="Kumar L."/>
            <person name="Lee Y.-H."/>
            <person name="Li L."/>
            <person name="Manners J.M."/>
            <person name="Miranda-Saavedra D."/>
            <person name="Mukherjee M."/>
            <person name="Park G."/>
            <person name="Park J."/>
            <person name="Park S.-Y."/>
            <person name="Proctor R.H."/>
            <person name="Regev A."/>
            <person name="Ruiz-Roldan M.C."/>
            <person name="Sain D."/>
            <person name="Sakthikumar S."/>
            <person name="Sykes S."/>
            <person name="Schwartz D.C."/>
            <person name="Turgeon B.G."/>
            <person name="Wapinski I."/>
            <person name="Yoder O."/>
            <person name="Young S."/>
            <person name="Zeng Q."/>
            <person name="Zhou S."/>
            <person name="Galagan J."/>
            <person name="Cuomo C.A."/>
            <person name="Kistler H.C."/>
            <person name="Rep M."/>
        </authorList>
    </citation>
    <scope>GENOME REANNOTATION</scope>
    <source>
        <strain>ATCC MYA-4620 / CBS 123657 / FGSC 9075 / NRRL 31084 / PH-1</strain>
    </source>
</reference>
<reference key="3">
    <citation type="journal article" date="2015" name="BMC Genomics">
        <title>The completed genome sequence of the pathogenic ascomycete fungus Fusarium graminearum.</title>
        <authorList>
            <person name="King R."/>
            <person name="Urban M."/>
            <person name="Hammond-Kosack M.C.U."/>
            <person name="Hassani-Pak K."/>
            <person name="Hammond-Kosack K.E."/>
        </authorList>
    </citation>
    <scope>NUCLEOTIDE SEQUENCE [LARGE SCALE GENOMIC DNA]</scope>
    <source>
        <strain>ATCC MYA-4620 / CBS 123657 / FGSC 9075 / NRRL 31084 / PH-1</strain>
    </source>
</reference>
<reference key="4">
    <citation type="journal article" date="2017" name="PLoS Pathog.">
        <title>A conserved fungal glycosyltransferase facilitates pathogenesis of plants by enabling hyphal growth on solid surfaces.</title>
        <authorList>
            <person name="King R."/>
            <person name="Urban M."/>
            <person name="Lauder R.P."/>
            <person name="Hawkins N."/>
            <person name="Evans M."/>
            <person name="Plummer A."/>
            <person name="Halsey K."/>
            <person name="Lovegrove A."/>
            <person name="Hammond-Kosack K."/>
            <person name="Rudd J.J."/>
        </authorList>
    </citation>
    <scope>FUNCTION</scope>
    <scope>DISRUPTION PHENOTYPE</scope>
    <scope>INDUCTION</scope>
    <scope>SUBCELLULAR LOCATION</scope>
</reference>